<reference key="1">
    <citation type="journal article" date="2007" name="PLoS ONE">
        <title>Analysis of the neurotoxin complex genes in Clostridium botulinum A1-A4 and B1 strains: BoNT/A3, /Ba4 and /B1 clusters are located within plasmids.</title>
        <authorList>
            <person name="Smith T.J."/>
            <person name="Hill K.K."/>
            <person name="Foley B.T."/>
            <person name="Detter J.C."/>
            <person name="Munk A.C."/>
            <person name="Bruce D.C."/>
            <person name="Doggett N.A."/>
            <person name="Smith L.A."/>
            <person name="Marks J.D."/>
            <person name="Xie G."/>
            <person name="Brettin T.S."/>
        </authorList>
    </citation>
    <scope>NUCLEOTIDE SEQUENCE [LARGE SCALE GENOMIC DNA]</scope>
    <source>
        <strain>ATCC 19397 / Type A</strain>
    </source>
</reference>
<proteinExistence type="inferred from homology"/>
<gene>
    <name evidence="1" type="primary">rplA</name>
    <name type="ordered locus">CLB_3548</name>
</gene>
<sequence>MGKKYTESVKLVDKNTLYTVQEAIELVTKTSKAKFDETVELAVRLGVDPRHADQQVRGAVVLPHGTGKTVRVLVFAKGDKVNEAQEAGADFVGAEELVEKIQKENWFDFDVVVATPDMMGVVGRLGRVLGPKGLMPNPKSGTVTFDVAKAIADIKAGKVEYRVDKTAIIHVPIGKSSFGEEKLSDNFHVLMEAVVKAKPAAAKGQYIKSVAISSTMGPGIKINPGKVLE</sequence>
<accession>A7FZ80</accession>
<dbReference type="EMBL" id="CP000726">
    <property type="protein sequence ID" value="ABS33703.1"/>
    <property type="molecule type" value="Genomic_DNA"/>
</dbReference>
<dbReference type="RefSeq" id="WP_003357362.1">
    <property type="nucleotide sequence ID" value="NC_009697.1"/>
</dbReference>
<dbReference type="SMR" id="A7FZ80"/>
<dbReference type="GeneID" id="5186180"/>
<dbReference type="KEGG" id="cba:CLB_3548"/>
<dbReference type="HOGENOM" id="CLU_062853_0_0_9"/>
<dbReference type="GO" id="GO:0015934">
    <property type="term" value="C:large ribosomal subunit"/>
    <property type="evidence" value="ECO:0007669"/>
    <property type="project" value="InterPro"/>
</dbReference>
<dbReference type="GO" id="GO:0019843">
    <property type="term" value="F:rRNA binding"/>
    <property type="evidence" value="ECO:0007669"/>
    <property type="project" value="UniProtKB-UniRule"/>
</dbReference>
<dbReference type="GO" id="GO:0003735">
    <property type="term" value="F:structural constituent of ribosome"/>
    <property type="evidence" value="ECO:0007669"/>
    <property type="project" value="InterPro"/>
</dbReference>
<dbReference type="GO" id="GO:0000049">
    <property type="term" value="F:tRNA binding"/>
    <property type="evidence" value="ECO:0007669"/>
    <property type="project" value="UniProtKB-KW"/>
</dbReference>
<dbReference type="GO" id="GO:0006417">
    <property type="term" value="P:regulation of translation"/>
    <property type="evidence" value="ECO:0007669"/>
    <property type="project" value="UniProtKB-KW"/>
</dbReference>
<dbReference type="GO" id="GO:0006412">
    <property type="term" value="P:translation"/>
    <property type="evidence" value="ECO:0007669"/>
    <property type="project" value="UniProtKB-UniRule"/>
</dbReference>
<dbReference type="CDD" id="cd00403">
    <property type="entry name" value="Ribosomal_L1"/>
    <property type="match status" value="1"/>
</dbReference>
<dbReference type="FunFam" id="3.40.50.790:FF:000001">
    <property type="entry name" value="50S ribosomal protein L1"/>
    <property type="match status" value="1"/>
</dbReference>
<dbReference type="Gene3D" id="3.30.190.20">
    <property type="match status" value="1"/>
</dbReference>
<dbReference type="Gene3D" id="3.40.50.790">
    <property type="match status" value="1"/>
</dbReference>
<dbReference type="HAMAP" id="MF_01318_B">
    <property type="entry name" value="Ribosomal_uL1_B"/>
    <property type="match status" value="1"/>
</dbReference>
<dbReference type="InterPro" id="IPR005878">
    <property type="entry name" value="Ribosom_uL1_bac-type"/>
</dbReference>
<dbReference type="InterPro" id="IPR002143">
    <property type="entry name" value="Ribosomal_uL1"/>
</dbReference>
<dbReference type="InterPro" id="IPR023674">
    <property type="entry name" value="Ribosomal_uL1-like"/>
</dbReference>
<dbReference type="InterPro" id="IPR028364">
    <property type="entry name" value="Ribosomal_uL1/biogenesis"/>
</dbReference>
<dbReference type="InterPro" id="IPR016095">
    <property type="entry name" value="Ribosomal_uL1_3-a/b-sand"/>
</dbReference>
<dbReference type="InterPro" id="IPR023673">
    <property type="entry name" value="Ribosomal_uL1_CS"/>
</dbReference>
<dbReference type="NCBIfam" id="TIGR01169">
    <property type="entry name" value="rplA_bact"/>
    <property type="match status" value="1"/>
</dbReference>
<dbReference type="PANTHER" id="PTHR36427">
    <property type="entry name" value="54S RIBOSOMAL PROTEIN L1, MITOCHONDRIAL"/>
    <property type="match status" value="1"/>
</dbReference>
<dbReference type="PANTHER" id="PTHR36427:SF3">
    <property type="entry name" value="LARGE RIBOSOMAL SUBUNIT PROTEIN UL1M"/>
    <property type="match status" value="1"/>
</dbReference>
<dbReference type="Pfam" id="PF00687">
    <property type="entry name" value="Ribosomal_L1"/>
    <property type="match status" value="1"/>
</dbReference>
<dbReference type="PIRSF" id="PIRSF002155">
    <property type="entry name" value="Ribosomal_L1"/>
    <property type="match status" value="1"/>
</dbReference>
<dbReference type="SUPFAM" id="SSF56808">
    <property type="entry name" value="Ribosomal protein L1"/>
    <property type="match status" value="1"/>
</dbReference>
<dbReference type="PROSITE" id="PS01199">
    <property type="entry name" value="RIBOSOMAL_L1"/>
    <property type="match status" value="1"/>
</dbReference>
<protein>
    <recommendedName>
        <fullName evidence="1">Large ribosomal subunit protein uL1</fullName>
    </recommendedName>
    <alternativeName>
        <fullName evidence="2">50S ribosomal protein L1</fullName>
    </alternativeName>
</protein>
<organism>
    <name type="scientific">Clostridium botulinum (strain ATCC 19397 / Type A)</name>
    <dbReference type="NCBI Taxonomy" id="441770"/>
    <lineage>
        <taxon>Bacteria</taxon>
        <taxon>Bacillati</taxon>
        <taxon>Bacillota</taxon>
        <taxon>Clostridia</taxon>
        <taxon>Eubacteriales</taxon>
        <taxon>Clostridiaceae</taxon>
        <taxon>Clostridium</taxon>
    </lineage>
</organism>
<comment type="function">
    <text evidence="1">Binds directly to 23S rRNA. The L1 stalk is quite mobile in the ribosome, and is involved in E site tRNA release.</text>
</comment>
<comment type="function">
    <text evidence="1">Protein L1 is also a translational repressor protein, it controls the translation of the L11 operon by binding to its mRNA.</text>
</comment>
<comment type="subunit">
    <text evidence="1">Part of the 50S ribosomal subunit.</text>
</comment>
<comment type="similarity">
    <text evidence="1">Belongs to the universal ribosomal protein uL1 family.</text>
</comment>
<evidence type="ECO:0000255" key="1">
    <source>
        <dbReference type="HAMAP-Rule" id="MF_01318"/>
    </source>
</evidence>
<evidence type="ECO:0000305" key="2"/>
<keyword id="KW-0678">Repressor</keyword>
<keyword id="KW-0687">Ribonucleoprotein</keyword>
<keyword id="KW-0689">Ribosomal protein</keyword>
<keyword id="KW-0694">RNA-binding</keyword>
<keyword id="KW-0699">rRNA-binding</keyword>
<keyword id="KW-0810">Translation regulation</keyword>
<keyword id="KW-0820">tRNA-binding</keyword>
<feature type="chain" id="PRO_0000307989" description="Large ribosomal subunit protein uL1">
    <location>
        <begin position="1"/>
        <end position="229"/>
    </location>
</feature>
<name>RL1_CLOB1</name>